<proteinExistence type="evidence at transcript level"/>
<gene>
    <name evidence="6" type="primary">RR2</name>
    <name evidence="9" type="ordered locus">Os02g0557800</name>
    <name evidence="7" type="ordered locus">LOC_Os02g35180</name>
    <name evidence="8" type="ORF">OSJNBb0038F20.11</name>
</gene>
<dbReference type="EMBL" id="BR000312">
    <property type="protein sequence ID" value="FAA00264.1"/>
    <property type="molecule type" value="Genomic_DNA"/>
</dbReference>
<dbReference type="EMBL" id="AB249662">
    <property type="protein sequence ID" value="BAE79356.1"/>
    <property type="molecule type" value="mRNA"/>
</dbReference>
<dbReference type="EMBL" id="AP005808">
    <property type="protein sequence ID" value="BAD16423.1"/>
    <property type="molecule type" value="Genomic_DNA"/>
</dbReference>
<dbReference type="EMBL" id="AP008208">
    <property type="protein sequence ID" value="BAF09056.2"/>
    <property type="status" value="ALT_INIT"/>
    <property type="molecule type" value="Genomic_DNA"/>
</dbReference>
<dbReference type="EMBL" id="AP014958">
    <property type="protein sequence ID" value="BAS79231.1"/>
    <property type="molecule type" value="Genomic_DNA"/>
</dbReference>
<dbReference type="EMBL" id="AK070645">
    <property type="protein sequence ID" value="BAG92075.1"/>
    <property type="molecule type" value="mRNA"/>
</dbReference>
<dbReference type="RefSeq" id="XP_015623125.1">
    <property type="nucleotide sequence ID" value="XM_015767639.1"/>
</dbReference>
<dbReference type="SMR" id="Q6YVX7"/>
<dbReference type="FunCoup" id="Q6YVX7">
    <property type="interactions" value="27"/>
</dbReference>
<dbReference type="STRING" id="39947.Q6YVX7"/>
<dbReference type="PaxDb" id="39947-Q6YVX7"/>
<dbReference type="EnsemblPlants" id="Os02t0557800-01">
    <property type="protein sequence ID" value="Os02t0557800-01"/>
    <property type="gene ID" value="Os02g0557800"/>
</dbReference>
<dbReference type="EnsemblPlants" id="Os02t0557800-02">
    <property type="protein sequence ID" value="Os02t0557800-02"/>
    <property type="gene ID" value="Os02g0557800"/>
</dbReference>
<dbReference type="Gramene" id="Os02t0557800-01">
    <property type="protein sequence ID" value="Os02t0557800-01"/>
    <property type="gene ID" value="Os02g0557800"/>
</dbReference>
<dbReference type="Gramene" id="Os02t0557800-02">
    <property type="protein sequence ID" value="Os02t0557800-02"/>
    <property type="gene ID" value="Os02g0557800"/>
</dbReference>
<dbReference type="KEGG" id="dosa:Os02g0557800"/>
<dbReference type="eggNOG" id="KOG1601">
    <property type="taxonomic scope" value="Eukaryota"/>
</dbReference>
<dbReference type="HOGENOM" id="CLU_000445_69_5_1"/>
<dbReference type="InParanoid" id="Q6YVX7"/>
<dbReference type="OMA" id="ETREMKM"/>
<dbReference type="OrthoDB" id="60033at2759"/>
<dbReference type="Proteomes" id="UP000000763">
    <property type="component" value="Chromosome 2"/>
</dbReference>
<dbReference type="Proteomes" id="UP000059680">
    <property type="component" value="Chromosome 2"/>
</dbReference>
<dbReference type="GO" id="GO:0005829">
    <property type="term" value="C:cytosol"/>
    <property type="evidence" value="ECO:0000314"/>
    <property type="project" value="UniProtKB"/>
</dbReference>
<dbReference type="GO" id="GO:0005634">
    <property type="term" value="C:nucleus"/>
    <property type="evidence" value="ECO:0000314"/>
    <property type="project" value="UniProtKB"/>
</dbReference>
<dbReference type="GO" id="GO:0009736">
    <property type="term" value="P:cytokinin-activated signaling pathway"/>
    <property type="evidence" value="ECO:0007669"/>
    <property type="project" value="UniProtKB-KW"/>
</dbReference>
<dbReference type="GO" id="GO:0000160">
    <property type="term" value="P:phosphorelay signal transduction system"/>
    <property type="evidence" value="ECO:0007669"/>
    <property type="project" value="UniProtKB-KW"/>
</dbReference>
<dbReference type="CDD" id="cd17581">
    <property type="entry name" value="REC_typeA_ARR"/>
    <property type="match status" value="1"/>
</dbReference>
<dbReference type="FunFam" id="3.40.50.2300:FF:000571">
    <property type="entry name" value="Two-component response regulator ORR2"/>
    <property type="match status" value="1"/>
</dbReference>
<dbReference type="Gene3D" id="3.40.50.2300">
    <property type="match status" value="1"/>
</dbReference>
<dbReference type="InterPro" id="IPR045279">
    <property type="entry name" value="ARR-like"/>
</dbReference>
<dbReference type="InterPro" id="IPR011006">
    <property type="entry name" value="CheY-like_superfamily"/>
</dbReference>
<dbReference type="InterPro" id="IPR001789">
    <property type="entry name" value="Sig_transdc_resp-reg_receiver"/>
</dbReference>
<dbReference type="PANTHER" id="PTHR43874">
    <property type="entry name" value="TWO-COMPONENT RESPONSE REGULATOR"/>
    <property type="match status" value="1"/>
</dbReference>
<dbReference type="PANTHER" id="PTHR43874:SF85">
    <property type="entry name" value="TWO-COMPONENT RESPONSE REGULATOR ORR2"/>
    <property type="match status" value="1"/>
</dbReference>
<dbReference type="Pfam" id="PF00072">
    <property type="entry name" value="Response_reg"/>
    <property type="match status" value="1"/>
</dbReference>
<dbReference type="SMART" id="SM00448">
    <property type="entry name" value="REC"/>
    <property type="match status" value="1"/>
</dbReference>
<dbReference type="SUPFAM" id="SSF52172">
    <property type="entry name" value="CheY-like"/>
    <property type="match status" value="1"/>
</dbReference>
<dbReference type="PROSITE" id="PS50110">
    <property type="entry name" value="RESPONSE_REGULATORY"/>
    <property type="match status" value="1"/>
</dbReference>
<name>ORR2_ORYSJ</name>
<accession>Q6YVX7</accession>
<accession>A0A0P0VKE8</accession>
<accession>Q0E0D2</accession>
<reference key="1">
    <citation type="journal article" date="2006" name="Gene">
        <title>Identification and characterization of cytokinin-signalling gene families in rice.</title>
        <authorList>
            <person name="Ito Y."/>
            <person name="Kurata N."/>
        </authorList>
    </citation>
    <scope>NUCLEOTIDE SEQUENCE [GENOMIC DNA]</scope>
    <scope>TISSUE SPECIFICITY</scope>
    <source>
        <strain>cv. Nipponbare</strain>
    </source>
</reference>
<reference key="2">
    <citation type="journal article" date="2007" name="Plant Cell Physiol.">
        <title>Overexpression of a type-A response regulator alters rice morphology and cytokinin metabolism.</title>
        <authorList>
            <person name="Hirose N."/>
            <person name="Makita N."/>
            <person name="Kojima M."/>
            <person name="Kamada-Nobusada T."/>
            <person name="Sakakibara H."/>
        </authorList>
    </citation>
    <scope>NUCLEOTIDE SEQUENCE [MRNA]</scope>
    <source>
        <strain>cv. Nipponbare</strain>
    </source>
</reference>
<reference key="3">
    <citation type="journal article" date="2005" name="Nature">
        <title>The map-based sequence of the rice genome.</title>
        <authorList>
            <consortium name="International rice genome sequencing project (IRGSP)"/>
        </authorList>
    </citation>
    <scope>NUCLEOTIDE SEQUENCE [LARGE SCALE GENOMIC DNA]</scope>
    <source>
        <strain>cv. Nipponbare</strain>
    </source>
</reference>
<reference key="4">
    <citation type="journal article" date="2008" name="Nucleic Acids Res.">
        <title>The rice annotation project database (RAP-DB): 2008 update.</title>
        <authorList>
            <consortium name="The rice annotation project (RAP)"/>
        </authorList>
    </citation>
    <scope>GENOME REANNOTATION</scope>
    <source>
        <strain>cv. Nipponbare</strain>
    </source>
</reference>
<reference key="5">
    <citation type="journal article" date="2013" name="Rice">
        <title>Improvement of the Oryza sativa Nipponbare reference genome using next generation sequence and optical map data.</title>
        <authorList>
            <person name="Kawahara Y."/>
            <person name="de la Bastide M."/>
            <person name="Hamilton J.P."/>
            <person name="Kanamori H."/>
            <person name="McCombie W.R."/>
            <person name="Ouyang S."/>
            <person name="Schwartz D.C."/>
            <person name="Tanaka T."/>
            <person name="Wu J."/>
            <person name="Zhou S."/>
            <person name="Childs K.L."/>
            <person name="Davidson R.M."/>
            <person name="Lin H."/>
            <person name="Quesada-Ocampo L."/>
            <person name="Vaillancourt B."/>
            <person name="Sakai H."/>
            <person name="Lee S.S."/>
            <person name="Kim J."/>
            <person name="Numa H."/>
            <person name="Itoh T."/>
            <person name="Buell C.R."/>
            <person name="Matsumoto T."/>
        </authorList>
    </citation>
    <scope>GENOME REANNOTATION</scope>
    <source>
        <strain>cv. Nipponbare</strain>
    </source>
</reference>
<reference key="6">
    <citation type="journal article" date="2003" name="Science">
        <title>Collection, mapping, and annotation of over 28,000 cDNA clones from japonica rice.</title>
        <authorList>
            <consortium name="The rice full-length cDNA consortium"/>
        </authorList>
    </citation>
    <scope>NUCLEOTIDE SEQUENCE [LARGE SCALE MRNA]</scope>
    <source>
        <strain>cv. Nipponbare</strain>
    </source>
</reference>
<reference key="7">
    <citation type="journal article" date="2007" name="Genomics">
        <title>The two-component signal system in rice (Oryza sativa L.): a genome-wide study of cytokinin signal perception and transduction.</title>
        <authorList>
            <person name="Du L."/>
            <person name="Jiao F."/>
            <person name="Chu J."/>
            <person name="Jin G."/>
            <person name="Chen M."/>
            <person name="Wu P."/>
        </authorList>
    </citation>
    <scope>INDUCTION BY CYTOKININ</scope>
</reference>
<reference key="8">
    <citation type="journal article" date="2007" name="Plant Physiol.">
        <title>Nomenclature for two-component signaling elements of rice.</title>
        <authorList>
            <person name="Schaller G.E."/>
            <person name="Doi K."/>
            <person name="Hwang I."/>
            <person name="Kieber J.J."/>
            <person name="Khurana J.P."/>
            <person name="Kurata N."/>
            <person name="Mizuno T."/>
            <person name="Pareek A."/>
            <person name="Shiu S.H."/>
            <person name="Wu P."/>
            <person name="Yip W.K."/>
        </authorList>
    </citation>
    <scope>GENE FAMILY</scope>
    <scope>NOMENCLATURE</scope>
</reference>
<reference key="9">
    <citation type="journal article" date="2012" name="Plant Physiol.">
        <title>Characterization of genes involved in cytokinin signaling and metabolism from rice.</title>
        <authorList>
            <person name="Tsai Y.C."/>
            <person name="Weir N.R."/>
            <person name="Hill K."/>
            <person name="Zhang W."/>
            <person name="Kim H.J."/>
            <person name="Shiu S.H."/>
            <person name="Schaller G.E."/>
            <person name="Kieber J.J."/>
        </authorList>
    </citation>
    <scope>SUBCELLULAR LOCATION</scope>
    <scope>INDUCTION BY CYTOKININ</scope>
</reference>
<comment type="function">
    <text evidence="1">Functions as a response regulator involved in His-to-Asp phosphorelay signal transduction system. Phosphorylation of the Asp residue in the receiver domain activates the ability of the protein to promote the transcription of target genes. Type-A response regulators seem to act as negative regulators of the cytokinin signaling.</text>
</comment>
<comment type="subcellular location">
    <subcellularLocation>
        <location evidence="4">Cytoplasm</location>
        <location evidence="4">Cytosol</location>
    </subcellularLocation>
    <subcellularLocation>
        <location evidence="4">Nucleus</location>
    </subcellularLocation>
</comment>
<comment type="induction">
    <text evidence="3 4">By cytokinin in roots and shoots.</text>
</comment>
<comment type="PTM">
    <text evidence="7">Two-component system major event consists of a His-to-Asp phosphorelay between a sensor histidine kinase (HK) and a response regulator (RR). In plants, the His-to-Asp phosphorelay involves an additional intermediate named Histidine-containing phosphotransfer protein (HPt). This multistep phosphorelay consists of a His-Asp-His-Asp sequential transfer of a phosphate group between first a His and an Asp of the HK protein, followed by the transfer to a conserved His of the HPt protein and finally the transfer to an Asp in the receiver domain of the RR protein.</text>
</comment>
<comment type="similarity">
    <text evidence="7">Belongs to the ARR family. Type-A subfamily.</text>
</comment>
<comment type="sequence caution" evidence="7">
    <conflict type="erroneous initiation">
        <sequence resource="EMBL-CDS" id="BAF09056"/>
    </conflict>
    <text>Extended N-terminus.</text>
</comment>
<evidence type="ECO:0000250" key="1">
    <source>
        <dbReference type="UniProtKB" id="Q9ZWS9"/>
    </source>
</evidence>
<evidence type="ECO:0000255" key="2">
    <source>
        <dbReference type="PROSITE-ProRule" id="PRU00169"/>
    </source>
</evidence>
<evidence type="ECO:0000269" key="3">
    <source>
    </source>
</evidence>
<evidence type="ECO:0000269" key="4">
    <source>
    </source>
</evidence>
<evidence type="ECO:0000303" key="5">
    <source>
    </source>
</evidence>
<evidence type="ECO:0000303" key="6">
    <source>
    </source>
</evidence>
<evidence type="ECO:0000305" key="7"/>
<evidence type="ECO:0000312" key="8">
    <source>
        <dbReference type="EMBL" id="BAD16423.1"/>
    </source>
</evidence>
<evidence type="ECO:0000312" key="9">
    <source>
        <dbReference type="EMBL" id="BAF09056.2"/>
    </source>
</evidence>
<organism>
    <name type="scientific">Oryza sativa subsp. japonica</name>
    <name type="common">Rice</name>
    <dbReference type="NCBI Taxonomy" id="39947"/>
    <lineage>
        <taxon>Eukaryota</taxon>
        <taxon>Viridiplantae</taxon>
        <taxon>Streptophyta</taxon>
        <taxon>Embryophyta</taxon>
        <taxon>Tracheophyta</taxon>
        <taxon>Spermatophyta</taxon>
        <taxon>Magnoliopsida</taxon>
        <taxon>Liliopsida</taxon>
        <taxon>Poales</taxon>
        <taxon>Poaceae</taxon>
        <taxon>BOP clade</taxon>
        <taxon>Oryzoideae</taxon>
        <taxon>Oryzeae</taxon>
        <taxon>Oryzinae</taxon>
        <taxon>Oryza</taxon>
        <taxon>Oryza sativa</taxon>
    </lineage>
</organism>
<sequence length="252" mass="26856">MGAEAVRVLVVDDSPVDRRVVELLLRAHCGGGGGAAAGEAAPFHVTAVDSGKKAMELLGRRRGDRDHLTPSSPAAAAAANDQAIDIVLTDYCMPEMTGYDLLKAIKALGSPNPIPVVVMSSENEPQRISRCLTAGAEDFILKPLKMNDVQRLRKCSGATRPKSAVAGDDDRCCNTAKKAAAAAAATPEQQQQQQRSSHLAGLAMVMNASSFEVSHYFQLIFKLILLAYAVLCLSQLLHRWSNGSSLLSLWCA</sequence>
<protein>
    <recommendedName>
        <fullName evidence="7">Two-component response regulator ORR2</fullName>
    </recommendedName>
    <alternativeName>
        <fullName evidence="5">OsRR2</fullName>
    </alternativeName>
</protein>
<keyword id="KW-0932">Cytokinin signaling pathway</keyword>
<keyword id="KW-0963">Cytoplasm</keyword>
<keyword id="KW-0539">Nucleus</keyword>
<keyword id="KW-0597">Phosphoprotein</keyword>
<keyword id="KW-1185">Reference proteome</keyword>
<keyword id="KW-0804">Transcription</keyword>
<keyword id="KW-0805">Transcription regulation</keyword>
<keyword id="KW-0902">Two-component regulatory system</keyword>
<feature type="chain" id="PRO_0000433818" description="Two-component response regulator ORR2">
    <location>
        <begin position="1"/>
        <end position="252"/>
    </location>
</feature>
<feature type="domain" description="Response regulatory" evidence="2">
    <location>
        <begin position="7"/>
        <end position="157"/>
    </location>
</feature>
<feature type="modified residue" description="4-aspartylphosphate" evidence="2">
    <location>
        <position position="90"/>
    </location>
</feature>